<proteinExistence type="inferred from homology"/>
<reference key="1">
    <citation type="journal article" date="2009" name="Proc. Natl. Acad. Sci. U.S.A.">
        <title>Characterizing a model human gut microbiota composed of members of its two dominant bacterial phyla.</title>
        <authorList>
            <person name="Mahowald M.A."/>
            <person name="Rey F.E."/>
            <person name="Seedorf H."/>
            <person name="Turnbaugh P.J."/>
            <person name="Fulton R.S."/>
            <person name="Wollam A."/>
            <person name="Shah N."/>
            <person name="Wang C."/>
            <person name="Magrini V."/>
            <person name="Wilson R.K."/>
            <person name="Cantarel B.L."/>
            <person name="Coutinho P.M."/>
            <person name="Henrissat B."/>
            <person name="Crock L.W."/>
            <person name="Russell A."/>
            <person name="Verberkmoes N.C."/>
            <person name="Hettich R.L."/>
            <person name="Gordon J.I."/>
        </authorList>
    </citation>
    <scope>NUCLEOTIDE SEQUENCE [LARGE SCALE GENOMIC DNA]</scope>
    <source>
        <strain>ATCC 33656 / DSM 3377 / JCM 17463 / KCTC 5835 / LMG 30912 / VPI 0990</strain>
    </source>
</reference>
<sequence>MKKISILGSTGSIGTQTLDVIREHGDMQVVALSCGRNLSLIEKQAREFKPQFVSVSDENDAKKLRTSLADTDIEVGYGMDGLIRCATIEPCDIVVTAIVGMLGIRPTIAAIKAKKTIALANKETLVTAGHIIIPLAKEYGVSILPVDSEHSAIFQSLQGNSMNPIKKILLTASGGPFRGRKLSELEGIRVEDALKHPNWSMGQKITIDSSTMVNKGLEVIEAKWLFDVDLSQIQVVVHPQSVIHSAVEYADGAVIAQLGTPDMRIPIQYALYYPSRPALSGDRLDLFKLKDLTFEAPDLDTFKGLALAMKAARAGGNIPTAFNAANERAVALFLNKKIKYLEIIDIIEACMENASFIENPSVDEILDTEQCAYDYISKRW</sequence>
<gene>
    <name evidence="1" type="primary">dxr</name>
    <name type="ordered locus">EUBREC_1767</name>
</gene>
<evidence type="ECO:0000255" key="1">
    <source>
        <dbReference type="HAMAP-Rule" id="MF_00183"/>
    </source>
</evidence>
<comment type="function">
    <text evidence="1">Catalyzes the NADPH-dependent rearrangement and reduction of 1-deoxy-D-xylulose-5-phosphate (DXP) to 2-C-methyl-D-erythritol 4-phosphate (MEP).</text>
</comment>
<comment type="catalytic activity">
    <reaction evidence="1">
        <text>2-C-methyl-D-erythritol 4-phosphate + NADP(+) = 1-deoxy-D-xylulose 5-phosphate + NADPH + H(+)</text>
        <dbReference type="Rhea" id="RHEA:13717"/>
        <dbReference type="ChEBI" id="CHEBI:15378"/>
        <dbReference type="ChEBI" id="CHEBI:57783"/>
        <dbReference type="ChEBI" id="CHEBI:57792"/>
        <dbReference type="ChEBI" id="CHEBI:58262"/>
        <dbReference type="ChEBI" id="CHEBI:58349"/>
        <dbReference type="EC" id="1.1.1.267"/>
    </reaction>
    <physiologicalReaction direction="right-to-left" evidence="1">
        <dbReference type="Rhea" id="RHEA:13719"/>
    </physiologicalReaction>
</comment>
<comment type="cofactor">
    <cofactor evidence="1">
        <name>Mg(2+)</name>
        <dbReference type="ChEBI" id="CHEBI:18420"/>
    </cofactor>
    <cofactor evidence="1">
        <name>Mn(2+)</name>
        <dbReference type="ChEBI" id="CHEBI:29035"/>
    </cofactor>
</comment>
<comment type="pathway">
    <text evidence="1">Isoprenoid biosynthesis; isopentenyl diphosphate biosynthesis via DXP pathway; isopentenyl diphosphate from 1-deoxy-D-xylulose 5-phosphate: step 1/6.</text>
</comment>
<comment type="similarity">
    <text evidence="1">Belongs to the DXR family.</text>
</comment>
<protein>
    <recommendedName>
        <fullName evidence="1">1-deoxy-D-xylulose 5-phosphate reductoisomerase</fullName>
        <shortName evidence="1">DXP reductoisomerase</shortName>
        <ecNumber evidence="1">1.1.1.267</ecNumber>
    </recommendedName>
    <alternativeName>
        <fullName evidence="1">1-deoxyxylulose-5-phosphate reductoisomerase</fullName>
    </alternativeName>
    <alternativeName>
        <fullName evidence="1">2-C-methyl-D-erythritol 4-phosphate synthase</fullName>
    </alternativeName>
</protein>
<accession>C4ZA70</accession>
<dbReference type="EC" id="1.1.1.267" evidence="1"/>
<dbReference type="EMBL" id="CP001107">
    <property type="protein sequence ID" value="ACR75511.1"/>
    <property type="molecule type" value="Genomic_DNA"/>
</dbReference>
<dbReference type="RefSeq" id="WP_012742609.1">
    <property type="nucleotide sequence ID" value="NC_012781.1"/>
</dbReference>
<dbReference type="SMR" id="C4ZA70"/>
<dbReference type="STRING" id="515619.EUBREC_1767"/>
<dbReference type="PaxDb" id="515619-EUBREC_1767"/>
<dbReference type="GeneID" id="86988565"/>
<dbReference type="KEGG" id="ere:EUBREC_1767"/>
<dbReference type="HOGENOM" id="CLU_035714_4_0_9"/>
<dbReference type="UniPathway" id="UPA00056">
    <property type="reaction ID" value="UER00092"/>
</dbReference>
<dbReference type="Proteomes" id="UP000001477">
    <property type="component" value="Chromosome"/>
</dbReference>
<dbReference type="GO" id="GO:0030604">
    <property type="term" value="F:1-deoxy-D-xylulose-5-phosphate reductoisomerase activity"/>
    <property type="evidence" value="ECO:0007669"/>
    <property type="project" value="UniProtKB-UniRule"/>
</dbReference>
<dbReference type="GO" id="GO:0030145">
    <property type="term" value="F:manganese ion binding"/>
    <property type="evidence" value="ECO:0007669"/>
    <property type="project" value="TreeGrafter"/>
</dbReference>
<dbReference type="GO" id="GO:0070402">
    <property type="term" value="F:NADPH binding"/>
    <property type="evidence" value="ECO:0007669"/>
    <property type="project" value="InterPro"/>
</dbReference>
<dbReference type="GO" id="GO:0051484">
    <property type="term" value="P:isopentenyl diphosphate biosynthetic process, methylerythritol 4-phosphate pathway involved in terpenoid biosynthetic process"/>
    <property type="evidence" value="ECO:0007669"/>
    <property type="project" value="TreeGrafter"/>
</dbReference>
<dbReference type="FunFam" id="3.40.50.720:FF:000045">
    <property type="entry name" value="1-deoxy-D-xylulose 5-phosphate reductoisomerase"/>
    <property type="match status" value="1"/>
</dbReference>
<dbReference type="Gene3D" id="1.10.1740.10">
    <property type="match status" value="1"/>
</dbReference>
<dbReference type="Gene3D" id="3.40.50.720">
    <property type="entry name" value="NAD(P)-binding Rossmann-like Domain"/>
    <property type="match status" value="1"/>
</dbReference>
<dbReference type="HAMAP" id="MF_00183">
    <property type="entry name" value="DXP_reductoisom"/>
    <property type="match status" value="1"/>
</dbReference>
<dbReference type="InterPro" id="IPR003821">
    <property type="entry name" value="DXP_reductoisomerase"/>
</dbReference>
<dbReference type="InterPro" id="IPR013644">
    <property type="entry name" value="DXP_reductoisomerase_C"/>
</dbReference>
<dbReference type="InterPro" id="IPR013512">
    <property type="entry name" value="DXP_reductoisomerase_N"/>
</dbReference>
<dbReference type="InterPro" id="IPR026877">
    <property type="entry name" value="DXPR_C"/>
</dbReference>
<dbReference type="InterPro" id="IPR036169">
    <property type="entry name" value="DXPR_C_sf"/>
</dbReference>
<dbReference type="InterPro" id="IPR036291">
    <property type="entry name" value="NAD(P)-bd_dom_sf"/>
</dbReference>
<dbReference type="NCBIfam" id="TIGR00243">
    <property type="entry name" value="Dxr"/>
    <property type="match status" value="1"/>
</dbReference>
<dbReference type="NCBIfam" id="NF009114">
    <property type="entry name" value="PRK12464.1"/>
    <property type="match status" value="1"/>
</dbReference>
<dbReference type="PANTHER" id="PTHR30525">
    <property type="entry name" value="1-DEOXY-D-XYLULOSE 5-PHOSPHATE REDUCTOISOMERASE"/>
    <property type="match status" value="1"/>
</dbReference>
<dbReference type="PANTHER" id="PTHR30525:SF0">
    <property type="entry name" value="1-DEOXY-D-XYLULOSE 5-PHOSPHATE REDUCTOISOMERASE, CHLOROPLASTIC"/>
    <property type="match status" value="1"/>
</dbReference>
<dbReference type="Pfam" id="PF08436">
    <property type="entry name" value="DXP_redisom_C"/>
    <property type="match status" value="1"/>
</dbReference>
<dbReference type="Pfam" id="PF02670">
    <property type="entry name" value="DXP_reductoisom"/>
    <property type="match status" value="1"/>
</dbReference>
<dbReference type="Pfam" id="PF13288">
    <property type="entry name" value="DXPR_C"/>
    <property type="match status" value="1"/>
</dbReference>
<dbReference type="PIRSF" id="PIRSF006205">
    <property type="entry name" value="Dxp_reductismrs"/>
    <property type="match status" value="1"/>
</dbReference>
<dbReference type="SUPFAM" id="SSF69055">
    <property type="entry name" value="1-deoxy-D-xylulose-5-phosphate reductoisomerase, C-terminal domain"/>
    <property type="match status" value="1"/>
</dbReference>
<dbReference type="SUPFAM" id="SSF55347">
    <property type="entry name" value="Glyceraldehyde-3-phosphate dehydrogenase-like, C-terminal domain"/>
    <property type="match status" value="1"/>
</dbReference>
<dbReference type="SUPFAM" id="SSF51735">
    <property type="entry name" value="NAD(P)-binding Rossmann-fold domains"/>
    <property type="match status" value="1"/>
</dbReference>
<organism>
    <name type="scientific">Agathobacter rectalis (strain ATCC 33656 / DSM 3377 / JCM 17463 / KCTC 5835 / VPI 0990)</name>
    <name type="common">Eubacterium rectale</name>
    <dbReference type="NCBI Taxonomy" id="515619"/>
    <lineage>
        <taxon>Bacteria</taxon>
        <taxon>Bacillati</taxon>
        <taxon>Bacillota</taxon>
        <taxon>Clostridia</taxon>
        <taxon>Lachnospirales</taxon>
        <taxon>Lachnospiraceae</taxon>
        <taxon>Agathobacter</taxon>
    </lineage>
</organism>
<name>DXR_AGARV</name>
<feature type="chain" id="PRO_1000203886" description="1-deoxy-D-xylulose 5-phosphate reductoisomerase">
    <location>
        <begin position="1"/>
        <end position="380"/>
    </location>
</feature>
<feature type="binding site" evidence="1">
    <location>
        <position position="10"/>
    </location>
    <ligand>
        <name>NADPH</name>
        <dbReference type="ChEBI" id="CHEBI:57783"/>
    </ligand>
</feature>
<feature type="binding site" evidence="1">
    <location>
        <position position="11"/>
    </location>
    <ligand>
        <name>NADPH</name>
        <dbReference type="ChEBI" id="CHEBI:57783"/>
    </ligand>
</feature>
<feature type="binding site" evidence="1">
    <location>
        <position position="12"/>
    </location>
    <ligand>
        <name>NADPH</name>
        <dbReference type="ChEBI" id="CHEBI:57783"/>
    </ligand>
</feature>
<feature type="binding site" evidence="1">
    <location>
        <position position="13"/>
    </location>
    <ligand>
        <name>NADPH</name>
        <dbReference type="ChEBI" id="CHEBI:57783"/>
    </ligand>
</feature>
<feature type="binding site" evidence="1">
    <location>
        <position position="35"/>
    </location>
    <ligand>
        <name>NADPH</name>
        <dbReference type="ChEBI" id="CHEBI:57783"/>
    </ligand>
</feature>
<feature type="binding site" evidence="1">
    <location>
        <position position="36"/>
    </location>
    <ligand>
        <name>NADPH</name>
        <dbReference type="ChEBI" id="CHEBI:57783"/>
    </ligand>
</feature>
<feature type="binding site" evidence="1">
    <location>
        <position position="37"/>
    </location>
    <ligand>
        <name>NADPH</name>
        <dbReference type="ChEBI" id="CHEBI:57783"/>
    </ligand>
</feature>
<feature type="binding site" evidence="1">
    <location>
        <position position="121"/>
    </location>
    <ligand>
        <name>NADPH</name>
        <dbReference type="ChEBI" id="CHEBI:57783"/>
    </ligand>
</feature>
<feature type="binding site" evidence="1">
    <location>
        <position position="122"/>
    </location>
    <ligand>
        <name>1-deoxy-D-xylulose 5-phosphate</name>
        <dbReference type="ChEBI" id="CHEBI:57792"/>
    </ligand>
</feature>
<feature type="binding site" evidence="1">
    <location>
        <position position="123"/>
    </location>
    <ligand>
        <name>NADPH</name>
        <dbReference type="ChEBI" id="CHEBI:57783"/>
    </ligand>
</feature>
<feature type="binding site" evidence="1">
    <location>
        <position position="147"/>
    </location>
    <ligand>
        <name>Mn(2+)</name>
        <dbReference type="ChEBI" id="CHEBI:29035"/>
    </ligand>
</feature>
<feature type="binding site" evidence="1">
    <location>
        <position position="148"/>
    </location>
    <ligand>
        <name>1-deoxy-D-xylulose 5-phosphate</name>
        <dbReference type="ChEBI" id="CHEBI:57792"/>
    </ligand>
</feature>
<feature type="binding site" evidence="1">
    <location>
        <position position="149"/>
    </location>
    <ligand>
        <name>1-deoxy-D-xylulose 5-phosphate</name>
        <dbReference type="ChEBI" id="CHEBI:57792"/>
    </ligand>
</feature>
<feature type="binding site" evidence="1">
    <location>
        <position position="149"/>
    </location>
    <ligand>
        <name>Mn(2+)</name>
        <dbReference type="ChEBI" id="CHEBI:29035"/>
    </ligand>
</feature>
<feature type="binding site" evidence="1">
    <location>
        <position position="173"/>
    </location>
    <ligand>
        <name>1-deoxy-D-xylulose 5-phosphate</name>
        <dbReference type="ChEBI" id="CHEBI:57792"/>
    </ligand>
</feature>
<feature type="binding site" evidence="1">
    <location>
        <position position="196"/>
    </location>
    <ligand>
        <name>1-deoxy-D-xylulose 5-phosphate</name>
        <dbReference type="ChEBI" id="CHEBI:57792"/>
    </ligand>
</feature>
<feature type="binding site" evidence="1">
    <location>
        <position position="202"/>
    </location>
    <ligand>
        <name>NADPH</name>
        <dbReference type="ChEBI" id="CHEBI:57783"/>
    </ligand>
</feature>
<feature type="binding site" evidence="1">
    <location>
        <position position="209"/>
    </location>
    <ligand>
        <name>1-deoxy-D-xylulose 5-phosphate</name>
        <dbReference type="ChEBI" id="CHEBI:57792"/>
    </ligand>
</feature>
<feature type="binding site" evidence="1">
    <location>
        <position position="214"/>
    </location>
    <ligand>
        <name>1-deoxy-D-xylulose 5-phosphate</name>
        <dbReference type="ChEBI" id="CHEBI:57792"/>
    </ligand>
</feature>
<feature type="binding site" evidence="1">
    <location>
        <position position="215"/>
    </location>
    <ligand>
        <name>1-deoxy-D-xylulose 5-phosphate</name>
        <dbReference type="ChEBI" id="CHEBI:57792"/>
    </ligand>
</feature>
<feature type="binding site" evidence="1">
    <location>
        <position position="218"/>
    </location>
    <ligand>
        <name>1-deoxy-D-xylulose 5-phosphate</name>
        <dbReference type="ChEBI" id="CHEBI:57792"/>
    </ligand>
</feature>
<feature type="binding site" evidence="1">
    <location>
        <position position="218"/>
    </location>
    <ligand>
        <name>Mn(2+)</name>
        <dbReference type="ChEBI" id="CHEBI:29035"/>
    </ligand>
</feature>
<keyword id="KW-0414">Isoprene biosynthesis</keyword>
<keyword id="KW-0464">Manganese</keyword>
<keyword id="KW-0479">Metal-binding</keyword>
<keyword id="KW-0521">NADP</keyword>
<keyword id="KW-0560">Oxidoreductase</keyword>